<dbReference type="EC" id="1.18.1.2" evidence="1"/>
<dbReference type="EMBL" id="CP000555">
    <property type="protein sequence ID" value="ABM94458.1"/>
    <property type="molecule type" value="Genomic_DNA"/>
</dbReference>
<dbReference type="RefSeq" id="WP_011829095.1">
    <property type="nucleotide sequence ID" value="NC_008825.1"/>
</dbReference>
<dbReference type="SMR" id="A2SFW9"/>
<dbReference type="STRING" id="420662.Mpe_A1496"/>
<dbReference type="KEGG" id="mpt:Mpe_A1496"/>
<dbReference type="eggNOG" id="COG0492">
    <property type="taxonomic scope" value="Bacteria"/>
</dbReference>
<dbReference type="HOGENOM" id="CLU_031864_5_5_4"/>
<dbReference type="Proteomes" id="UP000000366">
    <property type="component" value="Chromosome"/>
</dbReference>
<dbReference type="GO" id="GO:0004324">
    <property type="term" value="F:ferredoxin-NADP+ reductase activity"/>
    <property type="evidence" value="ECO:0007669"/>
    <property type="project" value="UniProtKB-UniRule"/>
</dbReference>
<dbReference type="GO" id="GO:0050660">
    <property type="term" value="F:flavin adenine dinucleotide binding"/>
    <property type="evidence" value="ECO:0007669"/>
    <property type="project" value="UniProtKB-UniRule"/>
</dbReference>
<dbReference type="GO" id="GO:0050661">
    <property type="term" value="F:NADP binding"/>
    <property type="evidence" value="ECO:0007669"/>
    <property type="project" value="UniProtKB-UniRule"/>
</dbReference>
<dbReference type="Gene3D" id="3.50.50.60">
    <property type="entry name" value="FAD/NAD(P)-binding domain"/>
    <property type="match status" value="2"/>
</dbReference>
<dbReference type="HAMAP" id="MF_01685">
    <property type="entry name" value="FENR2"/>
    <property type="match status" value="1"/>
</dbReference>
<dbReference type="InterPro" id="IPR036188">
    <property type="entry name" value="FAD/NAD-bd_sf"/>
</dbReference>
<dbReference type="InterPro" id="IPR023753">
    <property type="entry name" value="FAD/NAD-binding_dom"/>
</dbReference>
<dbReference type="InterPro" id="IPR022890">
    <property type="entry name" value="Fd--NADP_Rdtase_type_2"/>
</dbReference>
<dbReference type="InterPro" id="IPR050097">
    <property type="entry name" value="Ferredoxin-NADP_redctase_2"/>
</dbReference>
<dbReference type="PANTHER" id="PTHR48105">
    <property type="entry name" value="THIOREDOXIN REDUCTASE 1-RELATED-RELATED"/>
    <property type="match status" value="1"/>
</dbReference>
<dbReference type="Pfam" id="PF07992">
    <property type="entry name" value="Pyr_redox_2"/>
    <property type="match status" value="1"/>
</dbReference>
<dbReference type="PRINTS" id="PR00368">
    <property type="entry name" value="FADPNR"/>
</dbReference>
<dbReference type="PRINTS" id="PR00469">
    <property type="entry name" value="PNDRDTASEII"/>
</dbReference>
<dbReference type="SUPFAM" id="SSF51905">
    <property type="entry name" value="FAD/NAD(P)-binding domain"/>
    <property type="match status" value="2"/>
</dbReference>
<name>FENR_METPP</name>
<reference key="1">
    <citation type="journal article" date="2007" name="J. Bacteriol.">
        <title>Whole-genome analysis of the methyl tert-butyl ether-degrading beta-proteobacterium Methylibium petroleiphilum PM1.</title>
        <authorList>
            <person name="Kane S.R."/>
            <person name="Chakicherla A.Y."/>
            <person name="Chain P.S.G."/>
            <person name="Schmidt R."/>
            <person name="Shin M.W."/>
            <person name="Legler T.C."/>
            <person name="Scow K.M."/>
            <person name="Larimer F.W."/>
            <person name="Lucas S.M."/>
            <person name="Richardson P.M."/>
            <person name="Hristova K.R."/>
        </authorList>
    </citation>
    <scope>NUCLEOTIDE SEQUENCE [LARGE SCALE GENOMIC DNA]</scope>
    <source>
        <strain>ATCC BAA-1232 / LMG 22953 / PM1</strain>
    </source>
</reference>
<evidence type="ECO:0000255" key="1">
    <source>
        <dbReference type="HAMAP-Rule" id="MF_01685"/>
    </source>
</evidence>
<feature type="chain" id="PRO_0000364881" description="Ferredoxin--NADP reductase">
    <location>
        <begin position="1"/>
        <end position="366"/>
    </location>
</feature>
<feature type="binding site" evidence="1">
    <location>
        <position position="51"/>
    </location>
    <ligand>
        <name>FAD</name>
        <dbReference type="ChEBI" id="CHEBI:57692"/>
    </ligand>
</feature>
<feature type="binding site" evidence="1">
    <location>
        <position position="59"/>
    </location>
    <ligand>
        <name>FAD</name>
        <dbReference type="ChEBI" id="CHEBI:57692"/>
    </ligand>
</feature>
<feature type="binding site" evidence="1">
    <location>
        <position position="64"/>
    </location>
    <ligand>
        <name>FAD</name>
        <dbReference type="ChEBI" id="CHEBI:57692"/>
    </ligand>
</feature>
<feature type="binding site" evidence="1">
    <location>
        <position position="104"/>
    </location>
    <ligand>
        <name>FAD</name>
        <dbReference type="ChEBI" id="CHEBI:57692"/>
    </ligand>
</feature>
<feature type="binding site" evidence="1">
    <location>
        <position position="139"/>
    </location>
    <ligand>
        <name>FAD</name>
        <dbReference type="ChEBI" id="CHEBI:57692"/>
    </ligand>
</feature>
<feature type="binding site" evidence="1">
    <location>
        <position position="308"/>
    </location>
    <ligand>
        <name>FAD</name>
        <dbReference type="ChEBI" id="CHEBI:57692"/>
    </ligand>
</feature>
<feature type="binding site" evidence="1">
    <location>
        <position position="349"/>
    </location>
    <ligand>
        <name>FAD</name>
        <dbReference type="ChEBI" id="CHEBI:57692"/>
    </ligand>
</feature>
<proteinExistence type="inferred from homology"/>
<protein>
    <recommendedName>
        <fullName evidence="1">Ferredoxin--NADP reductase</fullName>
        <shortName evidence="1">FNR</shortName>
        <shortName evidence="1">Fd-NADP(+) reductase</shortName>
        <ecNumber evidence="1">1.18.1.2</ecNumber>
    </recommendedName>
</protein>
<comment type="catalytic activity">
    <reaction evidence="1">
        <text>2 reduced [2Fe-2S]-[ferredoxin] + NADP(+) + H(+) = 2 oxidized [2Fe-2S]-[ferredoxin] + NADPH</text>
        <dbReference type="Rhea" id="RHEA:20125"/>
        <dbReference type="Rhea" id="RHEA-COMP:10000"/>
        <dbReference type="Rhea" id="RHEA-COMP:10001"/>
        <dbReference type="ChEBI" id="CHEBI:15378"/>
        <dbReference type="ChEBI" id="CHEBI:33737"/>
        <dbReference type="ChEBI" id="CHEBI:33738"/>
        <dbReference type="ChEBI" id="CHEBI:57783"/>
        <dbReference type="ChEBI" id="CHEBI:58349"/>
        <dbReference type="EC" id="1.18.1.2"/>
    </reaction>
</comment>
<comment type="cofactor">
    <cofactor evidence="1">
        <name>FAD</name>
        <dbReference type="ChEBI" id="CHEBI:57692"/>
    </cofactor>
    <text evidence="1">Binds 1 FAD per subunit.</text>
</comment>
<comment type="subunit">
    <text evidence="1">Homodimer.</text>
</comment>
<comment type="similarity">
    <text evidence="1">Belongs to the ferredoxin--NADP reductase type 2 family.</text>
</comment>
<organism>
    <name type="scientific">Methylibium petroleiphilum (strain ATCC BAA-1232 / LMG 22953 / PM1)</name>
    <dbReference type="NCBI Taxonomy" id="420662"/>
    <lineage>
        <taxon>Bacteria</taxon>
        <taxon>Pseudomonadati</taxon>
        <taxon>Pseudomonadota</taxon>
        <taxon>Betaproteobacteria</taxon>
        <taxon>Burkholderiales</taxon>
        <taxon>Sphaerotilaceae</taxon>
        <taxon>Methylibium</taxon>
    </lineage>
</organism>
<keyword id="KW-0274">FAD</keyword>
<keyword id="KW-0285">Flavoprotein</keyword>
<keyword id="KW-0521">NADP</keyword>
<keyword id="KW-0560">Oxidoreductase</keyword>
<keyword id="KW-1185">Reference proteome</keyword>
<accession>A2SFW9</accession>
<gene>
    <name type="ordered locus">Mpe_A1496</name>
</gene>
<sequence>MDPQINPAITATANSHDGPIETDAVIVGAGPVGLFQVFELGLLEIKAHIIDSLAYPGGQCIELYPDKPIYDIPAVPVCTGKELTDNLLKQIEPFGATFHLGQEVTLVNKRDDGRFDLETSKGTRFITKTIFIAGGVGSFQPRLLKVDGLDQFDGSQLHYRVRNPSAFAGKNLVIVGGGDSALDWTLNFVQDGPNKAESVILVHRRDGFKAAPASVAKMKELCDAYEMQFIVGQVTGFEATEGQLRSVKVTGGDGVTRVVPLDMLLVFFGLSPKLGPIAEWGLNIERKQVVVDTEKFETNVPGIFAVGDINVYPGKKKLILSGFHEAALAAFGAAPYIFPEKRIHLQYTTTSPKLHKVLGVETPVFD</sequence>